<dbReference type="EMBL" id="AF148218">
    <property type="protein sequence ID" value="AAF19351.1"/>
    <property type="molecule type" value="mRNA"/>
</dbReference>
<dbReference type="EMBL" id="AF223067">
    <property type="protein sequence ID" value="AAF31457.1"/>
    <property type="molecule type" value="mRNA"/>
</dbReference>
<dbReference type="EMBL" id="AB031813">
    <property type="protein sequence ID" value="BAB12444.1"/>
    <property type="molecule type" value="mRNA"/>
</dbReference>
<dbReference type="EMBL" id="BC041147">
    <property type="protein sequence ID" value="AAH41147.1"/>
    <property type="molecule type" value="mRNA"/>
</dbReference>
<dbReference type="CCDS" id="CCDS39691.1"/>
<dbReference type="RefSeq" id="NP_038825.1">
    <property type="nucleotide sequence ID" value="NM_013797.5"/>
</dbReference>
<dbReference type="SMR" id="Q9QXZ6"/>
<dbReference type="FunCoup" id="Q9QXZ6">
    <property type="interactions" value="162"/>
</dbReference>
<dbReference type="STRING" id="10090.ENSMUSP00000037022"/>
<dbReference type="ChEMBL" id="CHEMBL2073696"/>
<dbReference type="GlyCosmos" id="Q9QXZ6">
    <property type="glycosylation" value="4 sites, No reported glycans"/>
</dbReference>
<dbReference type="GlyGen" id="Q9QXZ6">
    <property type="glycosylation" value="4 sites"/>
</dbReference>
<dbReference type="iPTMnet" id="Q9QXZ6"/>
<dbReference type="PhosphoSitePlus" id="Q9QXZ6"/>
<dbReference type="SwissPalm" id="Q9QXZ6"/>
<dbReference type="jPOST" id="Q9QXZ6"/>
<dbReference type="PaxDb" id="10090-ENSMUSP00000037022"/>
<dbReference type="ProteomicsDB" id="261100"/>
<dbReference type="DNASU" id="28248"/>
<dbReference type="Ensembl" id="ENSMUST00000042119.6">
    <property type="protein sequence ID" value="ENSMUSP00000037022.6"/>
    <property type="gene ID" value="ENSMUSG00000041698.12"/>
</dbReference>
<dbReference type="GeneID" id="28248"/>
<dbReference type="KEGG" id="mmu:28248"/>
<dbReference type="UCSC" id="uc009eot.2">
    <property type="organism name" value="mouse"/>
</dbReference>
<dbReference type="AGR" id="MGI:1351891"/>
<dbReference type="CTD" id="28248"/>
<dbReference type="MGI" id="MGI:1351891">
    <property type="gene designation" value="Slco1a1"/>
</dbReference>
<dbReference type="VEuPathDB" id="HostDB:ENSMUSG00000041698"/>
<dbReference type="eggNOG" id="KOG3626">
    <property type="taxonomic scope" value="Eukaryota"/>
</dbReference>
<dbReference type="GeneTree" id="ENSGT01130000278312"/>
<dbReference type="InParanoid" id="Q9QXZ6"/>
<dbReference type="OMA" id="TCTEKRA"/>
<dbReference type="OrthoDB" id="5062115at2759"/>
<dbReference type="PhylomeDB" id="Q9QXZ6"/>
<dbReference type="TreeFam" id="TF317540"/>
<dbReference type="BioGRID-ORCS" id="28248">
    <property type="hits" value="2 hits in 79 CRISPR screens"/>
</dbReference>
<dbReference type="PRO" id="PR:Q9QXZ6"/>
<dbReference type="Proteomes" id="UP000000589">
    <property type="component" value="Chromosome 6"/>
</dbReference>
<dbReference type="RNAct" id="Q9QXZ6">
    <property type="molecule type" value="protein"/>
</dbReference>
<dbReference type="Bgee" id="ENSMUSG00000041698">
    <property type="expression patterns" value="Expressed in right kidney and 20 other cell types or tissues"/>
</dbReference>
<dbReference type="ExpressionAtlas" id="Q9QXZ6">
    <property type="expression patterns" value="baseline and differential"/>
</dbReference>
<dbReference type="GO" id="GO:0016323">
    <property type="term" value="C:basolateral plasma membrane"/>
    <property type="evidence" value="ECO:0000314"/>
    <property type="project" value="MGI"/>
</dbReference>
<dbReference type="GO" id="GO:0016020">
    <property type="term" value="C:membrane"/>
    <property type="evidence" value="ECO:0000314"/>
    <property type="project" value="MGI"/>
</dbReference>
<dbReference type="GO" id="GO:0005886">
    <property type="term" value="C:plasma membrane"/>
    <property type="evidence" value="ECO:0000314"/>
    <property type="project" value="MGI"/>
</dbReference>
<dbReference type="GO" id="GO:0008514">
    <property type="term" value="F:organic anion transmembrane transporter activity"/>
    <property type="evidence" value="ECO:0000314"/>
    <property type="project" value="MGI"/>
</dbReference>
<dbReference type="GO" id="GO:0010467">
    <property type="term" value="P:gene expression"/>
    <property type="evidence" value="ECO:0000315"/>
    <property type="project" value="MGI"/>
</dbReference>
<dbReference type="GO" id="GO:0006811">
    <property type="term" value="P:monoatomic ion transport"/>
    <property type="evidence" value="ECO:0007669"/>
    <property type="project" value="UniProtKB-KW"/>
</dbReference>
<dbReference type="GO" id="GO:0015711">
    <property type="term" value="P:organic anion transport"/>
    <property type="evidence" value="ECO:0000314"/>
    <property type="project" value="MGI"/>
</dbReference>
<dbReference type="GO" id="GO:0035634">
    <property type="term" value="P:response to stilbenoid"/>
    <property type="evidence" value="ECO:0000270"/>
    <property type="project" value="UniProtKB"/>
</dbReference>
<dbReference type="GO" id="GO:0033574">
    <property type="term" value="P:response to testosterone"/>
    <property type="evidence" value="ECO:0007669"/>
    <property type="project" value="Ensembl"/>
</dbReference>
<dbReference type="GO" id="GO:0009410">
    <property type="term" value="P:response to xenobiotic stimulus"/>
    <property type="evidence" value="ECO:0000315"/>
    <property type="project" value="MGI"/>
</dbReference>
<dbReference type="GO" id="GO:0006805">
    <property type="term" value="P:xenobiotic metabolic process"/>
    <property type="evidence" value="ECO:0000315"/>
    <property type="project" value="MGI"/>
</dbReference>
<dbReference type="GO" id="GO:0042908">
    <property type="term" value="P:xenobiotic transport"/>
    <property type="evidence" value="ECO:0000315"/>
    <property type="project" value="MGI"/>
</dbReference>
<dbReference type="FunFam" id="1.20.1250.20:FF:000210">
    <property type="entry name" value="Solute carrier organic anion transporter family member"/>
    <property type="match status" value="1"/>
</dbReference>
<dbReference type="Gene3D" id="1.20.1250.20">
    <property type="entry name" value="MFS general substrate transporter like domains"/>
    <property type="match status" value="1"/>
</dbReference>
<dbReference type="InterPro" id="IPR002350">
    <property type="entry name" value="Kazal_dom"/>
</dbReference>
<dbReference type="InterPro" id="IPR036058">
    <property type="entry name" value="Kazal_dom_sf"/>
</dbReference>
<dbReference type="InterPro" id="IPR020846">
    <property type="entry name" value="MFS_dom"/>
</dbReference>
<dbReference type="InterPro" id="IPR036259">
    <property type="entry name" value="MFS_trans_sf"/>
</dbReference>
<dbReference type="InterPro" id="IPR004156">
    <property type="entry name" value="OATP"/>
</dbReference>
<dbReference type="NCBIfam" id="TIGR00805">
    <property type="entry name" value="oat"/>
    <property type="match status" value="1"/>
</dbReference>
<dbReference type="PANTHER" id="PTHR11388">
    <property type="entry name" value="ORGANIC ANION TRANSPORTER"/>
    <property type="match status" value="1"/>
</dbReference>
<dbReference type="PANTHER" id="PTHR11388:SF149">
    <property type="entry name" value="SOLUTE CARRIER ORGANIC ANION TRANSPORTER FAMILY MEMBER 1A1"/>
    <property type="match status" value="1"/>
</dbReference>
<dbReference type="Pfam" id="PF07648">
    <property type="entry name" value="Kazal_2"/>
    <property type="match status" value="1"/>
</dbReference>
<dbReference type="Pfam" id="PF03137">
    <property type="entry name" value="OATP"/>
    <property type="match status" value="1"/>
</dbReference>
<dbReference type="SUPFAM" id="SSF100895">
    <property type="entry name" value="Kazal-type serine protease inhibitors"/>
    <property type="match status" value="1"/>
</dbReference>
<dbReference type="SUPFAM" id="SSF103473">
    <property type="entry name" value="MFS general substrate transporter"/>
    <property type="match status" value="1"/>
</dbReference>
<dbReference type="PROSITE" id="PS51465">
    <property type="entry name" value="KAZAL_2"/>
    <property type="match status" value="1"/>
</dbReference>
<dbReference type="PROSITE" id="PS50850">
    <property type="entry name" value="MFS"/>
    <property type="match status" value="1"/>
</dbReference>
<evidence type="ECO:0000250" key="1">
    <source>
        <dbReference type="UniProtKB" id="P46720"/>
    </source>
</evidence>
<evidence type="ECO:0000255" key="2"/>
<evidence type="ECO:0000255" key="3">
    <source>
        <dbReference type="PROSITE-ProRule" id="PRU00798"/>
    </source>
</evidence>
<evidence type="ECO:0000269" key="4">
    <source>
    </source>
</evidence>
<evidence type="ECO:0000269" key="5">
    <source>
    </source>
</evidence>
<evidence type="ECO:0000303" key="6">
    <source>
    </source>
</evidence>
<evidence type="ECO:0000303" key="7">
    <source>
    </source>
</evidence>
<evidence type="ECO:0000305" key="8"/>
<evidence type="ECO:0000305" key="9">
    <source>
    </source>
</evidence>
<evidence type="ECO:0000305" key="10">
    <source>
    </source>
</evidence>
<evidence type="ECO:0000312" key="11">
    <source>
        <dbReference type="MGI" id="MGI:1351891"/>
    </source>
</evidence>
<gene>
    <name evidence="11" type="primary">Slco1a1</name>
    <name evidence="6" type="synonym">Oatp1a1</name>
    <name evidence="7" type="synonym">Slc21a1</name>
</gene>
<organism>
    <name type="scientific">Mus musculus</name>
    <name type="common">Mouse</name>
    <dbReference type="NCBI Taxonomy" id="10090"/>
    <lineage>
        <taxon>Eukaryota</taxon>
        <taxon>Metazoa</taxon>
        <taxon>Chordata</taxon>
        <taxon>Craniata</taxon>
        <taxon>Vertebrata</taxon>
        <taxon>Euteleostomi</taxon>
        <taxon>Mammalia</taxon>
        <taxon>Eutheria</taxon>
        <taxon>Euarchontoglires</taxon>
        <taxon>Glires</taxon>
        <taxon>Rodentia</taxon>
        <taxon>Myomorpha</taxon>
        <taxon>Muroidea</taxon>
        <taxon>Muridae</taxon>
        <taxon>Murinae</taxon>
        <taxon>Mus</taxon>
        <taxon>Mus</taxon>
    </lineage>
</organism>
<name>SO1A1_MOUSE</name>
<proteinExistence type="evidence at protein level"/>
<reference key="1">
    <citation type="journal article" date="2000" name="Biochem. J.">
        <title>Molecular cloning and functional characterization of the mouse organic anion transporting polypeptide 1 (Oatp1) and mapping of the gene to chromosome X.</title>
        <authorList>
            <person name="Hagenbuch B."/>
            <person name="Adler I.-D."/>
            <person name="Schmid T.E."/>
        </authorList>
    </citation>
    <scope>NUCLEOTIDE SEQUENCE [MRNA]</scope>
    <scope>FUNCTION</scope>
    <scope>TRANSPORTER ACTIVITY</scope>
    <scope>BIOPHYSICOCHEMICAL PROPERTIES</scope>
    <source>
        <strain>BALB/cJ</strain>
        <tissue>Liver</tissue>
    </source>
</reference>
<reference key="2">
    <citation type="journal article" date="2001" name="Biochim. Biophys. Acta">
        <title>Functional analysis and androgen-regulated expression of mouse organic anion transporting polypeptide 1 (Oatp1) in the kidney.</title>
        <authorList>
            <person name="Isern J."/>
            <person name="Hagenbuch B."/>
            <person name="Stieger B."/>
            <person name="Meier P.J."/>
            <person name="Meseguer A."/>
        </authorList>
    </citation>
    <scope>NUCLEOTIDE SEQUENCE [MRNA]</scope>
    <scope>FUNCTION</scope>
    <scope>TRANSPORTER ACTIVITY</scope>
    <scope>BIOPHYSICOCHEMICAL PROPERTIES</scope>
    <source>
        <strain>C57BL/6J</strain>
        <tissue>Kidney</tissue>
    </source>
</reference>
<reference key="3">
    <citation type="submission" date="1999-08" db="EMBL/GenBank/DDBJ databases">
        <title>Mouse organic anion transporting polypeptide 1 (oatp1).</title>
        <authorList>
            <person name="Ogura K."/>
            <person name="Choudhuri S."/>
            <person name="Klaassen C.D."/>
        </authorList>
    </citation>
    <scope>NUCLEOTIDE SEQUENCE [MRNA]</scope>
    <source>
        <strain>BALB/cJ</strain>
        <tissue>Liver</tissue>
    </source>
</reference>
<reference key="4">
    <citation type="journal article" date="2004" name="Genome Res.">
        <title>The status, quality, and expansion of the NIH full-length cDNA project: the Mammalian Gene Collection (MGC).</title>
        <authorList>
            <consortium name="The MGC Project Team"/>
        </authorList>
    </citation>
    <scope>NUCLEOTIDE SEQUENCE [LARGE SCALE MRNA]</scope>
    <source>
        <strain>FVB/N</strain>
        <tissue>Kidney</tissue>
    </source>
</reference>
<reference key="5">
    <citation type="journal article" date="2010" name="Cell">
        <title>A tissue-specific atlas of mouse protein phosphorylation and expression.</title>
        <authorList>
            <person name="Huttlin E.L."/>
            <person name="Jedrychowski M.P."/>
            <person name="Elias J.E."/>
            <person name="Goswami T."/>
            <person name="Rad R."/>
            <person name="Beausoleil S.A."/>
            <person name="Villen J."/>
            <person name="Haas W."/>
            <person name="Sowa M.E."/>
            <person name="Gygi S.P."/>
        </authorList>
    </citation>
    <scope>IDENTIFICATION BY MASS SPECTROMETRY [LARGE SCALE ANALYSIS]</scope>
    <source>
        <tissue>Kidney</tissue>
        <tissue>Liver</tissue>
    </source>
</reference>
<feature type="chain" id="PRO_0000191040" description="Solute carrier organic anion transporter family member 1A1">
    <location>
        <begin position="1"/>
        <end position="670"/>
    </location>
</feature>
<feature type="topological domain" description="Cytoplasmic" evidence="2">
    <location>
        <begin position="1"/>
        <end position="20"/>
    </location>
</feature>
<feature type="transmembrane region" description="Helical; Name=1" evidence="2">
    <location>
        <begin position="21"/>
        <end position="40"/>
    </location>
</feature>
<feature type="topological domain" description="Extracellular" evidence="2">
    <location>
        <begin position="41"/>
        <end position="59"/>
    </location>
</feature>
<feature type="transmembrane region" description="Helical; Name=2" evidence="2">
    <location>
        <begin position="60"/>
        <end position="80"/>
    </location>
</feature>
<feature type="topological domain" description="Cytoplasmic" evidence="2">
    <location>
        <begin position="81"/>
        <end position="86"/>
    </location>
</feature>
<feature type="transmembrane region" description="Helical; Name=3" evidence="2">
    <location>
        <begin position="87"/>
        <end position="111"/>
    </location>
</feature>
<feature type="topological domain" description="Extracellular" evidence="2">
    <location>
        <begin position="112"/>
        <end position="155"/>
    </location>
</feature>
<feature type="transmembrane region" description="Helical; Name=4" evidence="2">
    <location>
        <begin position="156"/>
        <end position="184"/>
    </location>
</feature>
<feature type="topological domain" description="Cytoplasmic" evidence="2">
    <location>
        <begin position="185"/>
        <end position="203"/>
    </location>
</feature>
<feature type="transmembrane region" description="Helical; Name=5" evidence="2">
    <location>
        <begin position="204"/>
        <end position="224"/>
    </location>
</feature>
<feature type="topological domain" description="Extracellular" evidence="2">
    <location>
        <begin position="225"/>
        <end position="242"/>
    </location>
</feature>
<feature type="transmembrane region" description="Helical; Name=6" evidence="2">
    <location>
        <begin position="243"/>
        <end position="267"/>
    </location>
</feature>
<feature type="topological domain" description="Cytoplasmic" evidence="2">
    <location>
        <begin position="268"/>
        <end position="311"/>
    </location>
</feature>
<feature type="transmembrane region" description="Helical; Name=7" evidence="2">
    <location>
        <begin position="312"/>
        <end position="333"/>
    </location>
</feature>
<feature type="topological domain" description="Extracellular" evidence="2">
    <location>
        <begin position="334"/>
        <end position="353"/>
    </location>
</feature>
<feature type="transmembrane region" description="Helical; Name=8" evidence="2">
    <location>
        <begin position="354"/>
        <end position="377"/>
    </location>
</feature>
<feature type="topological domain" description="Cytoplasmic" evidence="2">
    <location>
        <begin position="378"/>
        <end position="381"/>
    </location>
</feature>
<feature type="transmembrane region" description="Helical; Name=9" evidence="2">
    <location>
        <begin position="382"/>
        <end position="405"/>
    </location>
</feature>
<feature type="topological domain" description="Extracellular" evidence="2">
    <location>
        <begin position="406"/>
        <end position="513"/>
    </location>
</feature>
<feature type="transmembrane region" description="Helical; Name=10" evidence="2">
    <location>
        <begin position="514"/>
        <end position="536"/>
    </location>
</feature>
<feature type="topological domain" description="Cytoplasmic" evidence="2">
    <location>
        <begin position="537"/>
        <end position="545"/>
    </location>
</feature>
<feature type="transmembrane region" description="Helical; Name=11" evidence="2">
    <location>
        <begin position="546"/>
        <end position="571"/>
    </location>
</feature>
<feature type="topological domain" description="Extracellular" evidence="2">
    <location>
        <begin position="572"/>
        <end position="605"/>
    </location>
</feature>
<feature type="transmembrane region" description="Helical; Name=12" evidence="2">
    <location>
        <begin position="606"/>
        <end position="623"/>
    </location>
</feature>
<feature type="topological domain" description="Cytoplasmic" evidence="2">
    <location>
        <begin position="624"/>
        <end position="670"/>
    </location>
</feature>
<feature type="domain" description="Kazal-like" evidence="3">
    <location>
        <begin position="433"/>
        <end position="488"/>
    </location>
</feature>
<feature type="site" description="Essential for pH-sensitivity of estrone 3-sulfate transport" evidence="1">
    <location>
        <position position="107"/>
    </location>
</feature>
<feature type="modified residue" description="Phosphoserine" evidence="1">
    <location>
        <position position="634"/>
    </location>
</feature>
<feature type="glycosylation site" description="N-linked (GlcNAc...) asparagine" evidence="2">
    <location>
        <position position="124"/>
    </location>
</feature>
<feature type="glycosylation site" description="N-linked (GlcNAc...) asparagine" evidence="2">
    <location>
        <position position="135"/>
    </location>
</feature>
<feature type="glycosylation site" description="N-linked (GlcNAc...) asparagine" evidence="2">
    <location>
        <position position="483"/>
    </location>
</feature>
<feature type="glycosylation site" description="N-linked (GlcNAc...) asparagine" evidence="2">
    <location>
        <position position="492"/>
    </location>
</feature>
<feature type="disulfide bond" evidence="3">
    <location>
        <begin position="439"/>
        <end position="469"/>
    </location>
</feature>
<feature type="disulfide bond" evidence="3">
    <location>
        <begin position="445"/>
        <end position="465"/>
    </location>
</feature>
<feature type="disulfide bond" evidence="3">
    <location>
        <begin position="454"/>
        <end position="486"/>
    </location>
</feature>
<comment type="function">
    <text evidence="1 4 5">Mediates the Na(+)-independent transport of organic anions such as steroid sulfate conjugates (dehydroepiandrosterone sulfate (DHEAS), 17-beta-glucuronosyl estradiol, estrone-3-sulfate), conjugated (taurocholate) and unconjugated (cholate) bile acids, prostaglandin E2 (PGE2) and L-thyroxine T4 (PubMed:10600646, PubMed:11267661). Also capable of transporting sulfobromophthalein (BSP), ouabain and gadoxetate (PubMed:10600646). Hydrogencarbonate/HCO3(-) acts as the probable counteranion that exchanges for organic anions (By similarity). Shows a pH-sensitive substrate specificity which may be ascribed to the protonation state of the binding site and leads to a stimulation of substrate transport in an acidic microenvironment (By similarity).</text>
</comment>
<comment type="catalytic activity">
    <reaction evidence="9 10">
        <text>estrone 3-sulfate(out) + hydrogencarbonate(in) = estrone 3-sulfate(in) + hydrogencarbonate(out)</text>
        <dbReference type="Rhea" id="RHEA:73055"/>
        <dbReference type="ChEBI" id="CHEBI:17544"/>
        <dbReference type="ChEBI" id="CHEBI:60050"/>
    </reaction>
</comment>
<comment type="catalytic activity">
    <reaction evidence="9">
        <text>taurocholate(out) + hydrogencarbonate(in) = taurocholate(in) + hydrogencarbonate(out)</text>
        <dbReference type="Rhea" id="RHEA:73051"/>
        <dbReference type="ChEBI" id="CHEBI:17544"/>
        <dbReference type="ChEBI" id="CHEBI:36257"/>
    </reaction>
</comment>
<comment type="catalytic activity">
    <reaction evidence="1">
        <text>L-thyroxine(out) = L-thyroxine(in)</text>
        <dbReference type="Rhea" id="RHEA:71819"/>
        <dbReference type="ChEBI" id="CHEBI:58448"/>
    </reaction>
</comment>
<comment type="catalytic activity">
    <reaction evidence="10">
        <text>prostaglandin E2(out) = prostaglandin E2(in)</text>
        <dbReference type="Rhea" id="RHEA:50984"/>
        <dbReference type="ChEBI" id="CHEBI:606564"/>
    </reaction>
</comment>
<comment type="catalytic activity">
    <reaction evidence="10">
        <text>17beta-estradiol 17-O-(beta-D-glucuronate)(out) = 17beta-estradiol 17-O-(beta-D-glucuronate)(in)</text>
        <dbReference type="Rhea" id="RHEA:72691"/>
        <dbReference type="ChEBI" id="CHEBI:82961"/>
    </reaction>
</comment>
<comment type="catalytic activity">
    <reaction evidence="10">
        <text>dehydroepiandrosterone 3-sulfate(out) = dehydroepiandrosterone 3-sulfate(in)</text>
        <dbReference type="Rhea" id="RHEA:71839"/>
        <dbReference type="ChEBI" id="CHEBI:57905"/>
    </reaction>
</comment>
<comment type="biophysicochemical properties">
    <kinetics>
        <KM evidence="4">5 uM for estrone-3-sulfate (at pH 7.5)</KM>
        <KM evidence="4">12 uM for taurocholate (at pH 7.5)</KM>
        <KM evidence="5">8.2 uM for dehydroepiandrosterone sulfate (at pH 7.5)</KM>
        <KM evidence="5">4.9 uM for 17-beta-glucuronosyl estradiol (at pH 7.5)</KM>
    </kinetics>
</comment>
<comment type="subunit">
    <text evidence="1">Binds to PDZK1. Interaction with PDZK1 is required for expression on hepatocyte surface (By similarity).</text>
</comment>
<comment type="subcellular location">
    <subcellularLocation>
        <location evidence="1">Basolateral cell membrane</location>
        <topology evidence="1">Multi-pass membrane protein</topology>
    </subcellularLocation>
</comment>
<comment type="tissue specificity">
    <text evidence="4 5">Highly expressed in liver, and at lower levels in kidney (PubMed:10600646, PubMed:11267661). Not detected in other tissues (PubMed:10600646).</text>
</comment>
<comment type="similarity">
    <text evidence="8">Belongs to the organo anion transporter (TC 2.A.60) family.</text>
</comment>
<protein>
    <recommendedName>
        <fullName evidence="6">Solute carrier organic anion transporter family member 1A1</fullName>
    </recommendedName>
    <alternativeName>
        <fullName>Sodium-independent organic anion-transporting polypeptide 1</fullName>
        <shortName>OATP-1</shortName>
    </alternativeName>
    <alternativeName>
        <fullName evidence="7">Solute carrier family 21 member 1</fullName>
    </alternativeName>
</protein>
<accession>Q9QXZ6</accession>
<keyword id="KW-1003">Cell membrane</keyword>
<keyword id="KW-1015">Disulfide bond</keyword>
<keyword id="KW-0325">Glycoprotein</keyword>
<keyword id="KW-0406">Ion transport</keyword>
<keyword id="KW-0472">Membrane</keyword>
<keyword id="KW-0597">Phosphoprotein</keyword>
<keyword id="KW-1185">Reference proteome</keyword>
<keyword id="KW-0812">Transmembrane</keyword>
<keyword id="KW-1133">Transmembrane helix</keyword>
<keyword id="KW-0813">Transport</keyword>
<sequence length="670" mass="74396">MEETEKKVATQEGRFFSKMKVFLMSLTCAYLAKSLSGVYMNSMLTQIERQFGIPTSVVGFITGSFEIGNLLLIVFVSYFGRKLHRPIIIGVGCVVMGLGCFLMASPHFLMGRYKYETTISPTSNLSSNSFLCIENRTQTLKPTQDPTECVKEIKSLMWIYVLIGNTMRGIGETPIMPLGISYIEDFAKSENSPLYIGILEMGKIVGPIIGLLLGSFFARVYVDIGSVNTDDLTITPTDTRWVGAWWIGFLVCAGVNILTSIPFFFFPKTLPKKELQDNVDVTKYEKVEKHRERAKKENLGITKDFLPFMKSLCCNPIYMLFSLTSVLQINGFASTFTFLPKYLEQQYGKSTSEAVFLIGVYSLPPVCLGYLISGFIMKKFKITVKKAAYIAFGLSLSEYFIFLCNYLLTCDNFPVAGLTTSYKGVQHPLYGEKNVLADCNTRCSCLTDTWDPVCGDNGLAYMSACLAGCEKSVGTGTNMVFQNCSCIGSSGNSSAVLGLCKKGPECDNKLQYFLIKSVFSSFIFSLAAIPGYMVLLRCVKSEEKSIGVGLHAFFIRLLAGIPAPVYFGALIDRTCLHWGTLKCGQPGACRMYDINRFRHIYLGLPAAVRGSSFLPAVFILILMRKFHFPGDIHSPDTELAEMKLTEKESECTDVCRSPKVENDGELKTKL</sequence>